<dbReference type="EMBL" id="CP001339">
    <property type="protein sequence ID" value="ACL72449.1"/>
    <property type="molecule type" value="Genomic_DNA"/>
</dbReference>
<dbReference type="RefSeq" id="WP_012637932.1">
    <property type="nucleotide sequence ID" value="NC_011901.1"/>
</dbReference>
<dbReference type="SMR" id="B8GR29"/>
<dbReference type="STRING" id="396588.Tgr7_1364"/>
<dbReference type="KEGG" id="tgr:Tgr7_1364"/>
<dbReference type="eggNOG" id="COG1489">
    <property type="taxonomic scope" value="Bacteria"/>
</dbReference>
<dbReference type="HOGENOM" id="CLU_052299_2_0_6"/>
<dbReference type="OrthoDB" id="9802365at2"/>
<dbReference type="Proteomes" id="UP000002383">
    <property type="component" value="Chromosome"/>
</dbReference>
<dbReference type="GO" id="GO:0003677">
    <property type="term" value="F:DNA binding"/>
    <property type="evidence" value="ECO:0007669"/>
    <property type="project" value="InterPro"/>
</dbReference>
<dbReference type="CDD" id="cd22359">
    <property type="entry name" value="SfsA-like_bacterial"/>
    <property type="match status" value="1"/>
</dbReference>
<dbReference type="FunFam" id="2.40.50.580:FF:000001">
    <property type="entry name" value="Sugar fermentation stimulation protein A"/>
    <property type="match status" value="1"/>
</dbReference>
<dbReference type="Gene3D" id="2.40.50.580">
    <property type="match status" value="1"/>
</dbReference>
<dbReference type="Gene3D" id="3.40.1350.60">
    <property type="match status" value="1"/>
</dbReference>
<dbReference type="HAMAP" id="MF_00095">
    <property type="entry name" value="SfsA"/>
    <property type="match status" value="1"/>
</dbReference>
<dbReference type="InterPro" id="IPR005224">
    <property type="entry name" value="SfsA"/>
</dbReference>
<dbReference type="InterPro" id="IPR040452">
    <property type="entry name" value="SfsA_C"/>
</dbReference>
<dbReference type="InterPro" id="IPR041465">
    <property type="entry name" value="SfsA_N"/>
</dbReference>
<dbReference type="NCBIfam" id="TIGR00230">
    <property type="entry name" value="sfsA"/>
    <property type="match status" value="1"/>
</dbReference>
<dbReference type="PANTHER" id="PTHR30545">
    <property type="entry name" value="SUGAR FERMENTATION STIMULATION PROTEIN A"/>
    <property type="match status" value="1"/>
</dbReference>
<dbReference type="PANTHER" id="PTHR30545:SF2">
    <property type="entry name" value="SUGAR FERMENTATION STIMULATION PROTEIN A"/>
    <property type="match status" value="1"/>
</dbReference>
<dbReference type="Pfam" id="PF03749">
    <property type="entry name" value="SfsA"/>
    <property type="match status" value="1"/>
</dbReference>
<dbReference type="Pfam" id="PF17746">
    <property type="entry name" value="SfsA_N"/>
    <property type="match status" value="1"/>
</dbReference>
<feature type="chain" id="PRO_1000196979" description="Sugar fermentation stimulation protein homolog">
    <location>
        <begin position="1"/>
        <end position="237"/>
    </location>
</feature>
<reference key="1">
    <citation type="journal article" date="2011" name="Stand. Genomic Sci.">
        <title>Complete genome sequence of 'Thioalkalivibrio sulfidophilus' HL-EbGr7.</title>
        <authorList>
            <person name="Muyzer G."/>
            <person name="Sorokin D.Y."/>
            <person name="Mavromatis K."/>
            <person name="Lapidus A."/>
            <person name="Clum A."/>
            <person name="Ivanova N."/>
            <person name="Pati A."/>
            <person name="d'Haeseleer P."/>
            <person name="Woyke T."/>
            <person name="Kyrpides N.C."/>
        </authorList>
    </citation>
    <scope>NUCLEOTIDE SEQUENCE [LARGE SCALE GENOMIC DNA]</scope>
    <source>
        <strain>HL-EbGR7</strain>
    </source>
</reference>
<comment type="similarity">
    <text evidence="1">Belongs to the SfsA family.</text>
</comment>
<organism>
    <name type="scientific">Thioalkalivibrio sulfidiphilus (strain HL-EbGR7)</name>
    <dbReference type="NCBI Taxonomy" id="396588"/>
    <lineage>
        <taxon>Bacteria</taxon>
        <taxon>Pseudomonadati</taxon>
        <taxon>Pseudomonadota</taxon>
        <taxon>Gammaproteobacteria</taxon>
        <taxon>Chromatiales</taxon>
        <taxon>Ectothiorhodospiraceae</taxon>
        <taxon>Thioalkalivibrio</taxon>
    </lineage>
</organism>
<keyword id="KW-1185">Reference proteome</keyword>
<proteinExistence type="inferred from homology"/>
<name>SFSA_THISH</name>
<sequence length="237" mass="26028">MEFEPALIEVTLLRRYKRFLADVRTPDGREFTAHCPNTGSMMGCMEPGSRVWLSHSPDPKRKYAHTWQLVEAEGALVGINTGLSNRLVEEAIGSGLIAELAGWPGLRREVRYGDQGSRIDLLLEDGERRCYVEVKNVTAAVSEGVAIFPDAVSARGSKHLEELMLMVREGHQAALVFCVQRGDVHTVRPADAIDPLYGQRLREAAQAGVRVLACGARVWPGGVVLERVLDVDLSRAG</sequence>
<protein>
    <recommendedName>
        <fullName evidence="1">Sugar fermentation stimulation protein homolog</fullName>
    </recommendedName>
</protein>
<gene>
    <name evidence="1" type="primary">sfsA</name>
    <name type="ordered locus">Tgr7_1364</name>
</gene>
<accession>B8GR29</accession>
<evidence type="ECO:0000255" key="1">
    <source>
        <dbReference type="HAMAP-Rule" id="MF_00095"/>
    </source>
</evidence>